<evidence type="ECO:0000250" key="1">
    <source>
        <dbReference type="UniProtKB" id="Q3SZ86"/>
    </source>
</evidence>
<evidence type="ECO:0000255" key="2"/>
<evidence type="ECO:0000305" key="3"/>
<dbReference type="EMBL" id="AE014296">
    <property type="protein sequence ID" value="AAF49279.1"/>
    <property type="molecule type" value="Genomic_DNA"/>
</dbReference>
<dbReference type="EMBL" id="AY071284">
    <property type="protein sequence ID" value="AAL48906.1"/>
    <property type="molecule type" value="mRNA"/>
</dbReference>
<dbReference type="RefSeq" id="NP_524134.1">
    <property type="nucleotide sequence ID" value="NM_079410.3"/>
</dbReference>
<dbReference type="SMR" id="Q9VVN2"/>
<dbReference type="BioGRID" id="65286">
    <property type="interactions" value="20"/>
</dbReference>
<dbReference type="DIP" id="DIP-21290N"/>
<dbReference type="FunCoup" id="Q9VVN2">
    <property type="interactions" value="418"/>
</dbReference>
<dbReference type="IntAct" id="Q9VVN2">
    <property type="interactions" value="48"/>
</dbReference>
<dbReference type="STRING" id="7227.FBpp0074887"/>
<dbReference type="PaxDb" id="7227-FBpp0074887"/>
<dbReference type="EnsemblMetazoa" id="FBtr0075121">
    <property type="protein sequence ID" value="FBpp0074887"/>
    <property type="gene ID" value="FBgn0036774"/>
</dbReference>
<dbReference type="GeneID" id="40001"/>
<dbReference type="KEGG" id="dme:Dmel_CG7354"/>
<dbReference type="AGR" id="FB:FBgn0036774"/>
<dbReference type="CTD" id="64949"/>
<dbReference type="FlyBase" id="FBgn0036774">
    <property type="gene designation" value="mRpS26"/>
</dbReference>
<dbReference type="VEuPathDB" id="VectorBase:FBgn0036774"/>
<dbReference type="eggNOG" id="KOG4691">
    <property type="taxonomic scope" value="Eukaryota"/>
</dbReference>
<dbReference type="GeneTree" id="ENSGT00390000008453"/>
<dbReference type="HOGENOM" id="CLU_104778_1_0_1"/>
<dbReference type="InParanoid" id="Q9VVN2"/>
<dbReference type="OMA" id="WNNQENL"/>
<dbReference type="OrthoDB" id="5988811at2759"/>
<dbReference type="PhylomeDB" id="Q9VVN2"/>
<dbReference type="Reactome" id="R-DME-5389840">
    <property type="pathway name" value="Mitochondrial translation elongation"/>
</dbReference>
<dbReference type="Reactome" id="R-DME-5419276">
    <property type="pathway name" value="Mitochondrial translation termination"/>
</dbReference>
<dbReference type="SignaLink" id="Q9VVN2"/>
<dbReference type="BioGRID-ORCS" id="40001">
    <property type="hits" value="0 hits in 1 CRISPR screen"/>
</dbReference>
<dbReference type="GenomeRNAi" id="40001"/>
<dbReference type="PRO" id="PR:Q9VVN2"/>
<dbReference type="Proteomes" id="UP000000803">
    <property type="component" value="Chromosome 3L"/>
</dbReference>
<dbReference type="Bgee" id="FBgn0036774">
    <property type="expression patterns" value="Expressed in adult enteroendocrine precursor cell in adult midgut (Drosophila) and 156 other cell types or tissues"/>
</dbReference>
<dbReference type="GO" id="GO:0005763">
    <property type="term" value="C:mitochondrial small ribosomal subunit"/>
    <property type="evidence" value="ECO:0000250"/>
    <property type="project" value="UniProtKB"/>
</dbReference>
<dbReference type="GO" id="GO:0003735">
    <property type="term" value="F:structural constituent of ribosome"/>
    <property type="evidence" value="ECO:0000304"/>
    <property type="project" value="FlyBase"/>
</dbReference>
<dbReference type="GO" id="GO:0032543">
    <property type="term" value="P:mitochondrial translation"/>
    <property type="evidence" value="ECO:0000304"/>
    <property type="project" value="FlyBase"/>
</dbReference>
<dbReference type="InterPro" id="IPR026140">
    <property type="entry name" value="Ribosomal_mS26"/>
</dbReference>
<dbReference type="PANTHER" id="PTHR21035">
    <property type="entry name" value="28S RIBOSOMAL PROTEIN S26, MITOCHONDRIAL"/>
    <property type="match status" value="1"/>
</dbReference>
<dbReference type="PANTHER" id="PTHR21035:SF2">
    <property type="entry name" value="SMALL RIBOSOMAL SUBUNIT PROTEIN MS26"/>
    <property type="match status" value="1"/>
</dbReference>
<dbReference type="Pfam" id="PF14943">
    <property type="entry name" value="MRP-S26"/>
    <property type="match status" value="1"/>
</dbReference>
<keyword id="KW-0496">Mitochondrion</keyword>
<keyword id="KW-1185">Reference proteome</keyword>
<keyword id="KW-0687">Ribonucleoprotein</keyword>
<keyword id="KW-0689">Ribosomal protein</keyword>
<keyword id="KW-0809">Transit peptide</keyword>
<reference key="1">
    <citation type="journal article" date="2000" name="Science">
        <title>The genome sequence of Drosophila melanogaster.</title>
        <authorList>
            <person name="Adams M.D."/>
            <person name="Celniker S.E."/>
            <person name="Holt R.A."/>
            <person name="Evans C.A."/>
            <person name="Gocayne J.D."/>
            <person name="Amanatides P.G."/>
            <person name="Scherer S.E."/>
            <person name="Li P.W."/>
            <person name="Hoskins R.A."/>
            <person name="Galle R.F."/>
            <person name="George R.A."/>
            <person name="Lewis S.E."/>
            <person name="Richards S."/>
            <person name="Ashburner M."/>
            <person name="Henderson S.N."/>
            <person name="Sutton G.G."/>
            <person name="Wortman J.R."/>
            <person name="Yandell M.D."/>
            <person name="Zhang Q."/>
            <person name="Chen L.X."/>
            <person name="Brandon R.C."/>
            <person name="Rogers Y.-H.C."/>
            <person name="Blazej R.G."/>
            <person name="Champe M."/>
            <person name="Pfeiffer B.D."/>
            <person name="Wan K.H."/>
            <person name="Doyle C."/>
            <person name="Baxter E.G."/>
            <person name="Helt G."/>
            <person name="Nelson C.R."/>
            <person name="Miklos G.L.G."/>
            <person name="Abril J.F."/>
            <person name="Agbayani A."/>
            <person name="An H.-J."/>
            <person name="Andrews-Pfannkoch C."/>
            <person name="Baldwin D."/>
            <person name="Ballew R.M."/>
            <person name="Basu A."/>
            <person name="Baxendale J."/>
            <person name="Bayraktaroglu L."/>
            <person name="Beasley E.M."/>
            <person name="Beeson K.Y."/>
            <person name="Benos P.V."/>
            <person name="Berman B.P."/>
            <person name="Bhandari D."/>
            <person name="Bolshakov S."/>
            <person name="Borkova D."/>
            <person name="Botchan M.R."/>
            <person name="Bouck J."/>
            <person name="Brokstein P."/>
            <person name="Brottier P."/>
            <person name="Burtis K.C."/>
            <person name="Busam D.A."/>
            <person name="Butler H."/>
            <person name="Cadieu E."/>
            <person name="Center A."/>
            <person name="Chandra I."/>
            <person name="Cherry J.M."/>
            <person name="Cawley S."/>
            <person name="Dahlke C."/>
            <person name="Davenport L.B."/>
            <person name="Davies P."/>
            <person name="de Pablos B."/>
            <person name="Delcher A."/>
            <person name="Deng Z."/>
            <person name="Mays A.D."/>
            <person name="Dew I."/>
            <person name="Dietz S.M."/>
            <person name="Dodson K."/>
            <person name="Doup L.E."/>
            <person name="Downes M."/>
            <person name="Dugan-Rocha S."/>
            <person name="Dunkov B.C."/>
            <person name="Dunn P."/>
            <person name="Durbin K.J."/>
            <person name="Evangelista C.C."/>
            <person name="Ferraz C."/>
            <person name="Ferriera S."/>
            <person name="Fleischmann W."/>
            <person name="Fosler C."/>
            <person name="Gabrielian A.E."/>
            <person name="Garg N.S."/>
            <person name="Gelbart W.M."/>
            <person name="Glasser K."/>
            <person name="Glodek A."/>
            <person name="Gong F."/>
            <person name="Gorrell J.H."/>
            <person name="Gu Z."/>
            <person name="Guan P."/>
            <person name="Harris M."/>
            <person name="Harris N.L."/>
            <person name="Harvey D.A."/>
            <person name="Heiman T.J."/>
            <person name="Hernandez J.R."/>
            <person name="Houck J."/>
            <person name="Hostin D."/>
            <person name="Houston K.A."/>
            <person name="Howland T.J."/>
            <person name="Wei M.-H."/>
            <person name="Ibegwam C."/>
            <person name="Jalali M."/>
            <person name="Kalush F."/>
            <person name="Karpen G.H."/>
            <person name="Ke Z."/>
            <person name="Kennison J.A."/>
            <person name="Ketchum K.A."/>
            <person name="Kimmel B.E."/>
            <person name="Kodira C.D."/>
            <person name="Kraft C.L."/>
            <person name="Kravitz S."/>
            <person name="Kulp D."/>
            <person name="Lai Z."/>
            <person name="Lasko P."/>
            <person name="Lei Y."/>
            <person name="Levitsky A.A."/>
            <person name="Li J.H."/>
            <person name="Li Z."/>
            <person name="Liang Y."/>
            <person name="Lin X."/>
            <person name="Liu X."/>
            <person name="Mattei B."/>
            <person name="McIntosh T.C."/>
            <person name="McLeod M.P."/>
            <person name="McPherson D."/>
            <person name="Merkulov G."/>
            <person name="Milshina N.V."/>
            <person name="Mobarry C."/>
            <person name="Morris J."/>
            <person name="Moshrefi A."/>
            <person name="Mount S.M."/>
            <person name="Moy M."/>
            <person name="Murphy B."/>
            <person name="Murphy L."/>
            <person name="Muzny D.M."/>
            <person name="Nelson D.L."/>
            <person name="Nelson D.R."/>
            <person name="Nelson K.A."/>
            <person name="Nixon K."/>
            <person name="Nusskern D.R."/>
            <person name="Pacleb J.M."/>
            <person name="Palazzolo M."/>
            <person name="Pittman G.S."/>
            <person name="Pan S."/>
            <person name="Pollard J."/>
            <person name="Puri V."/>
            <person name="Reese M.G."/>
            <person name="Reinert K."/>
            <person name="Remington K."/>
            <person name="Saunders R.D.C."/>
            <person name="Scheeler F."/>
            <person name="Shen H."/>
            <person name="Shue B.C."/>
            <person name="Siden-Kiamos I."/>
            <person name="Simpson M."/>
            <person name="Skupski M.P."/>
            <person name="Smith T.J."/>
            <person name="Spier E."/>
            <person name="Spradling A.C."/>
            <person name="Stapleton M."/>
            <person name="Strong R."/>
            <person name="Sun E."/>
            <person name="Svirskas R."/>
            <person name="Tector C."/>
            <person name="Turner R."/>
            <person name="Venter E."/>
            <person name="Wang A.H."/>
            <person name="Wang X."/>
            <person name="Wang Z.-Y."/>
            <person name="Wassarman D.A."/>
            <person name="Weinstock G.M."/>
            <person name="Weissenbach J."/>
            <person name="Williams S.M."/>
            <person name="Woodage T."/>
            <person name="Worley K.C."/>
            <person name="Wu D."/>
            <person name="Yang S."/>
            <person name="Yao Q.A."/>
            <person name="Ye J."/>
            <person name="Yeh R.-F."/>
            <person name="Zaveri J.S."/>
            <person name="Zhan M."/>
            <person name="Zhang G."/>
            <person name="Zhao Q."/>
            <person name="Zheng L."/>
            <person name="Zheng X.H."/>
            <person name="Zhong F.N."/>
            <person name="Zhong W."/>
            <person name="Zhou X."/>
            <person name="Zhu S.C."/>
            <person name="Zhu X."/>
            <person name="Smith H.O."/>
            <person name="Gibbs R.A."/>
            <person name="Myers E.W."/>
            <person name="Rubin G.M."/>
            <person name="Venter J.C."/>
        </authorList>
    </citation>
    <scope>NUCLEOTIDE SEQUENCE [LARGE SCALE GENOMIC DNA]</scope>
    <source>
        <strain>Berkeley</strain>
    </source>
</reference>
<reference key="2">
    <citation type="journal article" date="2002" name="Genome Biol.">
        <title>Annotation of the Drosophila melanogaster euchromatic genome: a systematic review.</title>
        <authorList>
            <person name="Misra S."/>
            <person name="Crosby M.A."/>
            <person name="Mungall C.J."/>
            <person name="Matthews B.B."/>
            <person name="Campbell K.S."/>
            <person name="Hradecky P."/>
            <person name="Huang Y."/>
            <person name="Kaminker J.S."/>
            <person name="Millburn G.H."/>
            <person name="Prochnik S.E."/>
            <person name="Smith C.D."/>
            <person name="Tupy J.L."/>
            <person name="Whitfield E.J."/>
            <person name="Bayraktaroglu L."/>
            <person name="Berman B.P."/>
            <person name="Bettencourt B.R."/>
            <person name="Celniker S.E."/>
            <person name="de Grey A.D.N.J."/>
            <person name="Drysdale R.A."/>
            <person name="Harris N.L."/>
            <person name="Richter J."/>
            <person name="Russo S."/>
            <person name="Schroeder A.J."/>
            <person name="Shu S.Q."/>
            <person name="Stapleton M."/>
            <person name="Yamada C."/>
            <person name="Ashburner M."/>
            <person name="Gelbart W.M."/>
            <person name="Rubin G.M."/>
            <person name="Lewis S.E."/>
        </authorList>
    </citation>
    <scope>GENOME REANNOTATION</scope>
    <source>
        <strain>Berkeley</strain>
    </source>
</reference>
<reference key="3">
    <citation type="journal article" date="2002" name="Genome Biol.">
        <title>A Drosophila full-length cDNA resource.</title>
        <authorList>
            <person name="Stapleton M."/>
            <person name="Carlson J.W."/>
            <person name="Brokstein P."/>
            <person name="Yu C."/>
            <person name="Champe M."/>
            <person name="George R.A."/>
            <person name="Guarin H."/>
            <person name="Kronmiller B."/>
            <person name="Pacleb J.M."/>
            <person name="Park S."/>
            <person name="Wan K.H."/>
            <person name="Rubin G.M."/>
            <person name="Celniker S.E."/>
        </authorList>
    </citation>
    <scope>NUCLEOTIDE SEQUENCE [LARGE SCALE MRNA]</scope>
    <source>
        <strain>Berkeley</strain>
    </source>
</reference>
<name>RT26_DROME</name>
<accession>Q9VVN2</accession>
<gene>
    <name type="primary">mRpS26</name>
    <name type="ORF">CG7354</name>
</gene>
<comment type="subunit">
    <text evidence="1">Component of the mitochondrial ribosome small subunit (28S) which comprises a 12S rRNA and about 30 distinct proteins.</text>
</comment>
<comment type="subcellular location">
    <subcellularLocation>
        <location evidence="1">Mitochondrion</location>
    </subcellularLocation>
</comment>
<comment type="similarity">
    <text evidence="3">Belongs to the mitochondrion-specific ribosomal protein mS26 family.</text>
</comment>
<sequence length="225" mass="26264">MLRAGCQLLTQSTLPTGKTVGNSFALEFVRWRRKPRWLPVAKSKMFRVPERKKQSEEERTELMRLHNQYKTQLRSVRQFLREEVVRHEETSTADHIVLTPEQEEAEFQKCLDANAAWNAAIAKERDQRLAKKREEKVAYIQERLEAQQLREEERKEQANQRVLLEIERSKNYITRENLDAAIETALANPVDHNFAIDMAGNLYHGRSTSQLPDATPEPNQQVLSN</sequence>
<proteinExistence type="evidence at transcript level"/>
<organism>
    <name type="scientific">Drosophila melanogaster</name>
    <name type="common">Fruit fly</name>
    <dbReference type="NCBI Taxonomy" id="7227"/>
    <lineage>
        <taxon>Eukaryota</taxon>
        <taxon>Metazoa</taxon>
        <taxon>Ecdysozoa</taxon>
        <taxon>Arthropoda</taxon>
        <taxon>Hexapoda</taxon>
        <taxon>Insecta</taxon>
        <taxon>Pterygota</taxon>
        <taxon>Neoptera</taxon>
        <taxon>Endopterygota</taxon>
        <taxon>Diptera</taxon>
        <taxon>Brachycera</taxon>
        <taxon>Muscomorpha</taxon>
        <taxon>Ephydroidea</taxon>
        <taxon>Drosophilidae</taxon>
        <taxon>Drosophila</taxon>
        <taxon>Sophophora</taxon>
    </lineage>
</organism>
<protein>
    <recommendedName>
        <fullName evidence="3">Small ribosomal subunit protein mS26</fullName>
    </recommendedName>
    <alternativeName>
        <fullName evidence="3">28S ribosomal protein S26, mitochondrial</fullName>
        <shortName>MRP-S26</shortName>
        <shortName>S26mt</shortName>
    </alternativeName>
</protein>
<feature type="transit peptide" description="Mitochondrion" evidence="2">
    <location>
        <begin position="1"/>
        <end status="unknown"/>
    </location>
</feature>
<feature type="chain" id="PRO_0000030593" description="Small ribosomal subunit protein mS26">
    <location>
        <begin status="unknown"/>
        <end position="225"/>
    </location>
</feature>